<name>TRMFO_CROS5</name>
<protein>
    <recommendedName>
        <fullName evidence="1">Methylenetetrahydrofolate--tRNA-(uracil-5-)-methyltransferase TrmFO</fullName>
        <ecNumber evidence="1">2.1.1.74</ecNumber>
    </recommendedName>
    <alternativeName>
        <fullName evidence="1">Folate-dependent tRNA (uracil-5-)-methyltransferase</fullName>
    </alternativeName>
    <alternativeName>
        <fullName evidence="1">Folate-dependent tRNA(M-5-U54)-methyltransferase</fullName>
    </alternativeName>
</protein>
<gene>
    <name evidence="1" type="primary">trmFO</name>
    <name type="ordered locus">cce_0784</name>
</gene>
<sequence length="460" mass="50935">MTESTAKVQVIGGGLAGTEAAWQVAQAGIPVILHEMRPIRTSPAHHSQELAELVCSNSFGAMSSNRAAGLLHEELRRLNSIIIQTADKHAVPAGGALAVDRGVFSHQLTQTLQNHPLIELRRSEVQEIPSDGIVILATGPLTSPVLAEKLQQFTGMAYMSFFDAASPIIVGDSINRDIAFLASRYDKGEAAYLNCPLNPEQYLQFRDELCTAEQAELKEFERETAKFFEGCLPIEELAQRGEDTMRYGPLKPVGLFDARLGDFRDPENKEKRPYAVVQLRQEDKQGKLWNMVGFQTNLKWGEQKRVFRLIPGLENAEFVRMGVMHRNTFINSPQLLDPTLQFKSRPTLLAAGQLIGTEGYTAASAGGWLAGTNAARIALGLEPISLPSTTMMGALFEFISSASPKHFQPMPPNFGILPDLPVRIRNKRERYGKYRDRALADLNDCQTQLNNHQKNSVILV</sequence>
<organism>
    <name type="scientific">Crocosphaera subtropica (strain ATCC 51142 / BH68)</name>
    <name type="common">Cyanothece sp. (strain ATCC 51142)</name>
    <dbReference type="NCBI Taxonomy" id="43989"/>
    <lineage>
        <taxon>Bacteria</taxon>
        <taxon>Bacillati</taxon>
        <taxon>Cyanobacteriota</taxon>
        <taxon>Cyanophyceae</taxon>
        <taxon>Oscillatoriophycideae</taxon>
        <taxon>Chroococcales</taxon>
        <taxon>Aphanothecaceae</taxon>
        <taxon>Crocosphaera</taxon>
        <taxon>Crocosphaera subtropica</taxon>
    </lineage>
</organism>
<dbReference type="EC" id="2.1.1.74" evidence="1"/>
<dbReference type="EMBL" id="CP000806">
    <property type="protein sequence ID" value="ACB50135.1"/>
    <property type="molecule type" value="Genomic_DNA"/>
</dbReference>
<dbReference type="RefSeq" id="WP_009546024.1">
    <property type="nucleotide sequence ID" value="NC_010546.1"/>
</dbReference>
<dbReference type="SMR" id="B1WR77"/>
<dbReference type="STRING" id="43989.cce_0784"/>
<dbReference type="KEGG" id="cyt:cce_0784"/>
<dbReference type="eggNOG" id="COG1206">
    <property type="taxonomic scope" value="Bacteria"/>
</dbReference>
<dbReference type="HOGENOM" id="CLU_033057_1_0_3"/>
<dbReference type="OrthoDB" id="9803114at2"/>
<dbReference type="Proteomes" id="UP000001203">
    <property type="component" value="Chromosome circular"/>
</dbReference>
<dbReference type="GO" id="GO:0005829">
    <property type="term" value="C:cytosol"/>
    <property type="evidence" value="ECO:0007669"/>
    <property type="project" value="TreeGrafter"/>
</dbReference>
<dbReference type="GO" id="GO:0050660">
    <property type="term" value="F:flavin adenine dinucleotide binding"/>
    <property type="evidence" value="ECO:0007669"/>
    <property type="project" value="UniProtKB-UniRule"/>
</dbReference>
<dbReference type="GO" id="GO:0047151">
    <property type="term" value="F:tRNA (uracil(54)-C5)-methyltransferase activity, 5,10-methylenetetrahydrofolate-dependent"/>
    <property type="evidence" value="ECO:0007669"/>
    <property type="project" value="UniProtKB-UniRule"/>
</dbReference>
<dbReference type="GO" id="GO:0030488">
    <property type="term" value="P:tRNA methylation"/>
    <property type="evidence" value="ECO:0007669"/>
    <property type="project" value="TreeGrafter"/>
</dbReference>
<dbReference type="GO" id="GO:0002098">
    <property type="term" value="P:tRNA wobble uridine modification"/>
    <property type="evidence" value="ECO:0007669"/>
    <property type="project" value="TreeGrafter"/>
</dbReference>
<dbReference type="FunFam" id="3.50.50.60:FF:000035">
    <property type="entry name" value="Methylenetetrahydrofolate--tRNA-(uracil-5-)-methyltransferase TrmFO"/>
    <property type="match status" value="1"/>
</dbReference>
<dbReference type="Gene3D" id="3.50.50.60">
    <property type="entry name" value="FAD/NAD(P)-binding domain"/>
    <property type="match status" value="2"/>
</dbReference>
<dbReference type="HAMAP" id="MF_01037">
    <property type="entry name" value="TrmFO"/>
    <property type="match status" value="1"/>
</dbReference>
<dbReference type="InterPro" id="IPR036188">
    <property type="entry name" value="FAD/NAD-bd_sf"/>
</dbReference>
<dbReference type="InterPro" id="IPR002218">
    <property type="entry name" value="MnmG-rel"/>
</dbReference>
<dbReference type="InterPro" id="IPR020595">
    <property type="entry name" value="MnmG-rel_CS"/>
</dbReference>
<dbReference type="InterPro" id="IPR040131">
    <property type="entry name" value="MnmG_N"/>
</dbReference>
<dbReference type="InterPro" id="IPR004417">
    <property type="entry name" value="TrmFO"/>
</dbReference>
<dbReference type="NCBIfam" id="TIGR00137">
    <property type="entry name" value="gid_trmFO"/>
    <property type="match status" value="1"/>
</dbReference>
<dbReference type="NCBIfam" id="NF003739">
    <property type="entry name" value="PRK05335.1"/>
    <property type="match status" value="1"/>
</dbReference>
<dbReference type="PANTHER" id="PTHR11806">
    <property type="entry name" value="GLUCOSE INHIBITED DIVISION PROTEIN A"/>
    <property type="match status" value="1"/>
</dbReference>
<dbReference type="PANTHER" id="PTHR11806:SF2">
    <property type="entry name" value="METHYLENETETRAHYDROFOLATE--TRNA-(URACIL-5-)-METHYLTRANSFERASE TRMFO"/>
    <property type="match status" value="1"/>
</dbReference>
<dbReference type="Pfam" id="PF01134">
    <property type="entry name" value="GIDA"/>
    <property type="match status" value="1"/>
</dbReference>
<dbReference type="SUPFAM" id="SSF51905">
    <property type="entry name" value="FAD/NAD(P)-binding domain"/>
    <property type="match status" value="1"/>
</dbReference>
<dbReference type="PROSITE" id="PS01281">
    <property type="entry name" value="GIDA_2"/>
    <property type="match status" value="1"/>
</dbReference>
<comment type="function">
    <text evidence="1">Catalyzes the folate-dependent formation of 5-methyl-uridine at position 54 (M-5-U54) in all tRNAs.</text>
</comment>
<comment type="catalytic activity">
    <reaction evidence="1">
        <text>uridine(54) in tRNA + (6R)-5,10-methylene-5,6,7,8-tetrahydrofolate + NADH + H(+) = 5-methyluridine(54) in tRNA + (6S)-5,6,7,8-tetrahydrofolate + NAD(+)</text>
        <dbReference type="Rhea" id="RHEA:16873"/>
        <dbReference type="Rhea" id="RHEA-COMP:10167"/>
        <dbReference type="Rhea" id="RHEA-COMP:10193"/>
        <dbReference type="ChEBI" id="CHEBI:15378"/>
        <dbReference type="ChEBI" id="CHEBI:15636"/>
        <dbReference type="ChEBI" id="CHEBI:57453"/>
        <dbReference type="ChEBI" id="CHEBI:57540"/>
        <dbReference type="ChEBI" id="CHEBI:57945"/>
        <dbReference type="ChEBI" id="CHEBI:65315"/>
        <dbReference type="ChEBI" id="CHEBI:74447"/>
        <dbReference type="EC" id="2.1.1.74"/>
    </reaction>
</comment>
<comment type="catalytic activity">
    <reaction evidence="1">
        <text>uridine(54) in tRNA + (6R)-5,10-methylene-5,6,7,8-tetrahydrofolate + NADPH + H(+) = 5-methyluridine(54) in tRNA + (6S)-5,6,7,8-tetrahydrofolate + NADP(+)</text>
        <dbReference type="Rhea" id="RHEA:62372"/>
        <dbReference type="Rhea" id="RHEA-COMP:10167"/>
        <dbReference type="Rhea" id="RHEA-COMP:10193"/>
        <dbReference type="ChEBI" id="CHEBI:15378"/>
        <dbReference type="ChEBI" id="CHEBI:15636"/>
        <dbReference type="ChEBI" id="CHEBI:57453"/>
        <dbReference type="ChEBI" id="CHEBI:57783"/>
        <dbReference type="ChEBI" id="CHEBI:58349"/>
        <dbReference type="ChEBI" id="CHEBI:65315"/>
        <dbReference type="ChEBI" id="CHEBI:74447"/>
        <dbReference type="EC" id="2.1.1.74"/>
    </reaction>
</comment>
<comment type="cofactor">
    <cofactor evidence="1">
        <name>FAD</name>
        <dbReference type="ChEBI" id="CHEBI:57692"/>
    </cofactor>
</comment>
<comment type="subcellular location">
    <subcellularLocation>
        <location evidence="1">Cytoplasm</location>
    </subcellularLocation>
</comment>
<comment type="similarity">
    <text evidence="1">Belongs to the MnmG family. TrmFO subfamily.</text>
</comment>
<feature type="chain" id="PRO_0000346330" description="Methylenetetrahydrofolate--tRNA-(uracil-5-)-methyltransferase TrmFO">
    <location>
        <begin position="1"/>
        <end position="460"/>
    </location>
</feature>
<feature type="binding site" evidence="1">
    <location>
        <begin position="12"/>
        <end position="17"/>
    </location>
    <ligand>
        <name>FAD</name>
        <dbReference type="ChEBI" id="CHEBI:57692"/>
    </ligand>
</feature>
<evidence type="ECO:0000255" key="1">
    <source>
        <dbReference type="HAMAP-Rule" id="MF_01037"/>
    </source>
</evidence>
<proteinExistence type="inferred from homology"/>
<reference key="1">
    <citation type="journal article" date="2008" name="Proc. Natl. Acad. Sci. U.S.A.">
        <title>The genome of Cyanothece 51142, a unicellular diazotrophic cyanobacterium important in the marine nitrogen cycle.</title>
        <authorList>
            <person name="Welsh E.A."/>
            <person name="Liberton M."/>
            <person name="Stoeckel J."/>
            <person name="Loh T."/>
            <person name="Elvitigala T."/>
            <person name="Wang C."/>
            <person name="Wollam A."/>
            <person name="Fulton R.S."/>
            <person name="Clifton S.W."/>
            <person name="Jacobs J.M."/>
            <person name="Aurora R."/>
            <person name="Ghosh B.K."/>
            <person name="Sherman L.A."/>
            <person name="Smith R.D."/>
            <person name="Wilson R.K."/>
            <person name="Pakrasi H.B."/>
        </authorList>
    </citation>
    <scope>NUCLEOTIDE SEQUENCE [LARGE SCALE GENOMIC DNA]</scope>
    <source>
        <strain>ATCC 51142 / BH68</strain>
    </source>
</reference>
<accession>B1WR77</accession>
<keyword id="KW-0963">Cytoplasm</keyword>
<keyword id="KW-0274">FAD</keyword>
<keyword id="KW-0285">Flavoprotein</keyword>
<keyword id="KW-0489">Methyltransferase</keyword>
<keyword id="KW-0520">NAD</keyword>
<keyword id="KW-0521">NADP</keyword>
<keyword id="KW-1185">Reference proteome</keyword>
<keyword id="KW-0808">Transferase</keyword>
<keyword id="KW-0819">tRNA processing</keyword>